<name>YRKF_BACSU</name>
<evidence type="ECO:0000250" key="1">
    <source>
        <dbReference type="UniProtKB" id="P0A890"/>
    </source>
</evidence>
<evidence type="ECO:0000255" key="2">
    <source>
        <dbReference type="PROSITE-ProRule" id="PRU00173"/>
    </source>
</evidence>
<evidence type="ECO:0000305" key="3"/>
<proteinExistence type="inferred from homology"/>
<accession>P54433</accession>
<keyword id="KW-1185">Reference proteome</keyword>
<dbReference type="EMBL" id="D84432">
    <property type="protein sequence ID" value="BAA12361.1"/>
    <property type="molecule type" value="Genomic_DNA"/>
</dbReference>
<dbReference type="EMBL" id="AL009126">
    <property type="protein sequence ID" value="CAB14594.1"/>
    <property type="molecule type" value="Genomic_DNA"/>
</dbReference>
<dbReference type="PIR" id="D69976">
    <property type="entry name" value="D69976"/>
</dbReference>
<dbReference type="RefSeq" id="NP_390530.1">
    <property type="nucleotide sequence ID" value="NC_000964.3"/>
</dbReference>
<dbReference type="RefSeq" id="WP_004399169.1">
    <property type="nucleotide sequence ID" value="NZ_OZ025638.1"/>
</dbReference>
<dbReference type="SMR" id="P54433"/>
<dbReference type="FunCoup" id="P54433">
    <property type="interactions" value="419"/>
</dbReference>
<dbReference type="STRING" id="224308.BSU26530"/>
<dbReference type="PaxDb" id="224308-BSU26530"/>
<dbReference type="EnsemblBacteria" id="CAB14594">
    <property type="protein sequence ID" value="CAB14594"/>
    <property type="gene ID" value="BSU_26530"/>
</dbReference>
<dbReference type="GeneID" id="937647"/>
<dbReference type="KEGG" id="bsu:BSU26530"/>
<dbReference type="PATRIC" id="fig|224308.179.peg.2881"/>
<dbReference type="eggNOG" id="COG0425">
    <property type="taxonomic scope" value="Bacteria"/>
</dbReference>
<dbReference type="eggNOG" id="COG0607">
    <property type="taxonomic scope" value="Bacteria"/>
</dbReference>
<dbReference type="InParanoid" id="P54433"/>
<dbReference type="OrthoDB" id="9796234at2"/>
<dbReference type="PhylomeDB" id="P54433"/>
<dbReference type="BioCyc" id="BSUB:BSU26530-MONOMER"/>
<dbReference type="Proteomes" id="UP000001570">
    <property type="component" value="Chromosome"/>
</dbReference>
<dbReference type="CDD" id="cd00158">
    <property type="entry name" value="RHOD"/>
    <property type="match status" value="1"/>
</dbReference>
<dbReference type="CDD" id="cd00291">
    <property type="entry name" value="SirA_YedF_YeeD"/>
    <property type="match status" value="1"/>
</dbReference>
<dbReference type="Gene3D" id="3.40.250.10">
    <property type="entry name" value="Rhodanese-like domain"/>
    <property type="match status" value="1"/>
</dbReference>
<dbReference type="Gene3D" id="3.30.110.40">
    <property type="entry name" value="TusA-like domain"/>
    <property type="match status" value="1"/>
</dbReference>
<dbReference type="InterPro" id="IPR001763">
    <property type="entry name" value="Rhodanese-like_dom"/>
</dbReference>
<dbReference type="InterPro" id="IPR036873">
    <property type="entry name" value="Rhodanese-like_dom_sf"/>
</dbReference>
<dbReference type="InterPro" id="IPR001455">
    <property type="entry name" value="TusA-like"/>
</dbReference>
<dbReference type="InterPro" id="IPR036868">
    <property type="entry name" value="TusA-like_sf"/>
</dbReference>
<dbReference type="PANTHER" id="PTHR33279">
    <property type="entry name" value="SULFUR CARRIER PROTEIN YEDF-RELATED"/>
    <property type="match status" value="1"/>
</dbReference>
<dbReference type="PANTHER" id="PTHR33279:SF6">
    <property type="entry name" value="SULFUR CARRIER PROTEIN YEDF-RELATED"/>
    <property type="match status" value="1"/>
</dbReference>
<dbReference type="Pfam" id="PF00581">
    <property type="entry name" value="Rhodanese"/>
    <property type="match status" value="1"/>
</dbReference>
<dbReference type="Pfam" id="PF01206">
    <property type="entry name" value="TusA"/>
    <property type="match status" value="1"/>
</dbReference>
<dbReference type="SMART" id="SM00450">
    <property type="entry name" value="RHOD"/>
    <property type="match status" value="1"/>
</dbReference>
<dbReference type="SUPFAM" id="SSF52821">
    <property type="entry name" value="Rhodanese/Cell cycle control phosphatase"/>
    <property type="match status" value="1"/>
</dbReference>
<dbReference type="SUPFAM" id="SSF64307">
    <property type="entry name" value="SirA-like"/>
    <property type="match status" value="1"/>
</dbReference>
<dbReference type="PROSITE" id="PS50206">
    <property type="entry name" value="RHODANESE_3"/>
    <property type="match status" value="1"/>
</dbReference>
<dbReference type="PROSITE" id="PS01148">
    <property type="entry name" value="UPF0033"/>
    <property type="match status" value="1"/>
</dbReference>
<organism>
    <name type="scientific">Bacillus subtilis (strain 168)</name>
    <dbReference type="NCBI Taxonomy" id="224308"/>
    <lineage>
        <taxon>Bacteria</taxon>
        <taxon>Bacillati</taxon>
        <taxon>Bacillota</taxon>
        <taxon>Bacilli</taxon>
        <taxon>Bacillales</taxon>
        <taxon>Bacillaceae</taxon>
        <taxon>Bacillus</taxon>
    </lineage>
</organism>
<comment type="similarity">
    <text evidence="3">Belongs to the sulfur carrier protein TusA family.</text>
</comment>
<feature type="chain" id="PRO_0000159071" description="Putative sulfur carrier protein YrkF">
    <location>
        <begin position="1"/>
        <end position="185"/>
    </location>
</feature>
<feature type="domain" description="Rhodanese" evidence="2">
    <location>
        <begin position="101"/>
        <end position="185"/>
    </location>
</feature>
<feature type="active site" description="Cysteine persulfide intermediate" evidence="1">
    <location>
        <position position="15"/>
    </location>
</feature>
<gene>
    <name type="primary">yrkF</name>
    <name type="ordered locus">BSU26530</name>
</gene>
<protein>
    <recommendedName>
        <fullName>Putative sulfur carrier protein YrkF</fullName>
    </recommendedName>
</protein>
<sequence length="185" mass="20655">MMKATIVLDAKGLACPMPIVKTKKRMKDLKAGEVLEIHATDKGSTADLEAWAKSTGHEYLGTEAEGEILRHFLRKGGEHSSENASSIPEISLEAFKQKVDSDESLNILDVREIEEYEKAHIPGVVHIPLGEVEKRANELNENDEIYIICHSGRRSEMAARTMKKQGFKKVINVVPGMRDWTGKTE</sequence>
<reference key="1">
    <citation type="journal article" date="1996" name="Microbiology">
        <title>Systematic sequencing of the 283 kb 210 degrees-232 degrees region of the Bacillus subtilis genome containing the skin element and many sporulation genes.</title>
        <authorList>
            <person name="Mizuno M."/>
            <person name="Masuda S."/>
            <person name="Takemaru K."/>
            <person name="Hosono S."/>
            <person name="Sato T."/>
            <person name="Takeuchi M."/>
            <person name="Kobayashi Y."/>
        </authorList>
    </citation>
    <scope>NUCLEOTIDE SEQUENCE [GENOMIC DNA]</scope>
    <source>
        <strain>168 / JH642</strain>
    </source>
</reference>
<reference key="2">
    <citation type="journal article" date="1997" name="Nature">
        <title>The complete genome sequence of the Gram-positive bacterium Bacillus subtilis.</title>
        <authorList>
            <person name="Kunst F."/>
            <person name="Ogasawara N."/>
            <person name="Moszer I."/>
            <person name="Albertini A.M."/>
            <person name="Alloni G."/>
            <person name="Azevedo V."/>
            <person name="Bertero M.G."/>
            <person name="Bessieres P."/>
            <person name="Bolotin A."/>
            <person name="Borchert S."/>
            <person name="Borriss R."/>
            <person name="Boursier L."/>
            <person name="Brans A."/>
            <person name="Braun M."/>
            <person name="Brignell S.C."/>
            <person name="Bron S."/>
            <person name="Brouillet S."/>
            <person name="Bruschi C.V."/>
            <person name="Caldwell B."/>
            <person name="Capuano V."/>
            <person name="Carter N.M."/>
            <person name="Choi S.-K."/>
            <person name="Codani J.-J."/>
            <person name="Connerton I.F."/>
            <person name="Cummings N.J."/>
            <person name="Daniel R.A."/>
            <person name="Denizot F."/>
            <person name="Devine K.M."/>
            <person name="Duesterhoeft A."/>
            <person name="Ehrlich S.D."/>
            <person name="Emmerson P.T."/>
            <person name="Entian K.-D."/>
            <person name="Errington J."/>
            <person name="Fabret C."/>
            <person name="Ferrari E."/>
            <person name="Foulger D."/>
            <person name="Fritz C."/>
            <person name="Fujita M."/>
            <person name="Fujita Y."/>
            <person name="Fuma S."/>
            <person name="Galizzi A."/>
            <person name="Galleron N."/>
            <person name="Ghim S.-Y."/>
            <person name="Glaser P."/>
            <person name="Goffeau A."/>
            <person name="Golightly E.J."/>
            <person name="Grandi G."/>
            <person name="Guiseppi G."/>
            <person name="Guy B.J."/>
            <person name="Haga K."/>
            <person name="Haiech J."/>
            <person name="Harwood C.R."/>
            <person name="Henaut A."/>
            <person name="Hilbert H."/>
            <person name="Holsappel S."/>
            <person name="Hosono S."/>
            <person name="Hullo M.-F."/>
            <person name="Itaya M."/>
            <person name="Jones L.-M."/>
            <person name="Joris B."/>
            <person name="Karamata D."/>
            <person name="Kasahara Y."/>
            <person name="Klaerr-Blanchard M."/>
            <person name="Klein C."/>
            <person name="Kobayashi Y."/>
            <person name="Koetter P."/>
            <person name="Koningstein G."/>
            <person name="Krogh S."/>
            <person name="Kumano M."/>
            <person name="Kurita K."/>
            <person name="Lapidus A."/>
            <person name="Lardinois S."/>
            <person name="Lauber J."/>
            <person name="Lazarevic V."/>
            <person name="Lee S.-M."/>
            <person name="Levine A."/>
            <person name="Liu H."/>
            <person name="Masuda S."/>
            <person name="Mauel C."/>
            <person name="Medigue C."/>
            <person name="Medina N."/>
            <person name="Mellado R.P."/>
            <person name="Mizuno M."/>
            <person name="Moestl D."/>
            <person name="Nakai S."/>
            <person name="Noback M."/>
            <person name="Noone D."/>
            <person name="O'Reilly M."/>
            <person name="Ogawa K."/>
            <person name="Ogiwara A."/>
            <person name="Oudega B."/>
            <person name="Park S.-H."/>
            <person name="Parro V."/>
            <person name="Pohl T.M."/>
            <person name="Portetelle D."/>
            <person name="Porwollik S."/>
            <person name="Prescott A.M."/>
            <person name="Presecan E."/>
            <person name="Pujic P."/>
            <person name="Purnelle B."/>
            <person name="Rapoport G."/>
            <person name="Rey M."/>
            <person name="Reynolds S."/>
            <person name="Rieger M."/>
            <person name="Rivolta C."/>
            <person name="Rocha E."/>
            <person name="Roche B."/>
            <person name="Rose M."/>
            <person name="Sadaie Y."/>
            <person name="Sato T."/>
            <person name="Scanlan E."/>
            <person name="Schleich S."/>
            <person name="Schroeter R."/>
            <person name="Scoffone F."/>
            <person name="Sekiguchi J."/>
            <person name="Sekowska A."/>
            <person name="Seror S.J."/>
            <person name="Serror P."/>
            <person name="Shin B.-S."/>
            <person name="Soldo B."/>
            <person name="Sorokin A."/>
            <person name="Tacconi E."/>
            <person name="Takagi T."/>
            <person name="Takahashi H."/>
            <person name="Takemaru K."/>
            <person name="Takeuchi M."/>
            <person name="Tamakoshi A."/>
            <person name="Tanaka T."/>
            <person name="Terpstra P."/>
            <person name="Tognoni A."/>
            <person name="Tosato V."/>
            <person name="Uchiyama S."/>
            <person name="Vandenbol M."/>
            <person name="Vannier F."/>
            <person name="Vassarotti A."/>
            <person name="Viari A."/>
            <person name="Wambutt R."/>
            <person name="Wedler E."/>
            <person name="Wedler H."/>
            <person name="Weitzenegger T."/>
            <person name="Winters P."/>
            <person name="Wipat A."/>
            <person name="Yamamoto H."/>
            <person name="Yamane K."/>
            <person name="Yasumoto K."/>
            <person name="Yata K."/>
            <person name="Yoshida K."/>
            <person name="Yoshikawa H.-F."/>
            <person name="Zumstein E."/>
            <person name="Yoshikawa H."/>
            <person name="Danchin A."/>
        </authorList>
    </citation>
    <scope>NUCLEOTIDE SEQUENCE [LARGE SCALE GENOMIC DNA]</scope>
    <source>
        <strain>168</strain>
    </source>
</reference>